<accession>Q6GHJ9</accession>
<gene>
    <name type="ordered locus">SAR1212</name>
</gene>
<protein>
    <recommendedName>
        <fullName evidence="1">UPF0122 protein SAR1212</fullName>
    </recommendedName>
</protein>
<proteinExistence type="inferred from homology"/>
<comment type="function">
    <text evidence="1">Might take part in the signal recognition particle (SRP) pathway. This is inferred from the conservation of its genetic proximity to ftsY/ffh. May be a regulatory protein.</text>
</comment>
<comment type="similarity">
    <text evidence="1">Belongs to the UPF0122 family.</text>
</comment>
<feature type="chain" id="PRO_0000211878" description="UPF0122 protein SAR1212">
    <location>
        <begin position="1"/>
        <end position="110"/>
    </location>
</feature>
<reference key="1">
    <citation type="journal article" date="2004" name="Proc. Natl. Acad. Sci. U.S.A.">
        <title>Complete genomes of two clinical Staphylococcus aureus strains: evidence for the rapid evolution of virulence and drug resistance.</title>
        <authorList>
            <person name="Holden M.T.G."/>
            <person name="Feil E.J."/>
            <person name="Lindsay J.A."/>
            <person name="Peacock S.J."/>
            <person name="Day N.P.J."/>
            <person name="Enright M.C."/>
            <person name="Foster T.J."/>
            <person name="Moore C.E."/>
            <person name="Hurst L."/>
            <person name="Atkin R."/>
            <person name="Barron A."/>
            <person name="Bason N."/>
            <person name="Bentley S.D."/>
            <person name="Chillingworth C."/>
            <person name="Chillingworth T."/>
            <person name="Churcher C."/>
            <person name="Clark L."/>
            <person name="Corton C."/>
            <person name="Cronin A."/>
            <person name="Doggett J."/>
            <person name="Dowd L."/>
            <person name="Feltwell T."/>
            <person name="Hance Z."/>
            <person name="Harris B."/>
            <person name="Hauser H."/>
            <person name="Holroyd S."/>
            <person name="Jagels K."/>
            <person name="James K.D."/>
            <person name="Lennard N."/>
            <person name="Line A."/>
            <person name="Mayes R."/>
            <person name="Moule S."/>
            <person name="Mungall K."/>
            <person name="Ormond D."/>
            <person name="Quail M.A."/>
            <person name="Rabbinowitsch E."/>
            <person name="Rutherford K.M."/>
            <person name="Sanders M."/>
            <person name="Sharp S."/>
            <person name="Simmonds M."/>
            <person name="Stevens K."/>
            <person name="Whitehead S."/>
            <person name="Barrell B.G."/>
            <person name="Spratt B.G."/>
            <person name="Parkhill J."/>
        </authorList>
    </citation>
    <scope>NUCLEOTIDE SEQUENCE [LARGE SCALE GENOMIC DNA]</scope>
    <source>
        <strain>MRSA252</strain>
    </source>
</reference>
<evidence type="ECO:0000255" key="1">
    <source>
        <dbReference type="HAMAP-Rule" id="MF_00245"/>
    </source>
</evidence>
<sequence length="110" mass="13581">MGQNDLVKTLRMNYLFDFYQSLLTNKQRNYLELFYLEDYSLSEIADTFNVSRQAVYDNIRRTGDLVEDYEKKLELYQKFEQRREIYDEMKKHLSNPEQIQRYIQQLEDLE</sequence>
<name>Y1212_STAAR</name>
<organism>
    <name type="scientific">Staphylococcus aureus (strain MRSA252)</name>
    <dbReference type="NCBI Taxonomy" id="282458"/>
    <lineage>
        <taxon>Bacteria</taxon>
        <taxon>Bacillati</taxon>
        <taxon>Bacillota</taxon>
        <taxon>Bacilli</taxon>
        <taxon>Bacillales</taxon>
        <taxon>Staphylococcaceae</taxon>
        <taxon>Staphylococcus</taxon>
    </lineage>
</organism>
<dbReference type="EMBL" id="BX571856">
    <property type="protein sequence ID" value="CAG40214.1"/>
    <property type="molecule type" value="Genomic_DNA"/>
</dbReference>
<dbReference type="RefSeq" id="WP_000531319.1">
    <property type="nucleotide sequence ID" value="NC_002952.2"/>
</dbReference>
<dbReference type="SMR" id="Q6GHJ9"/>
<dbReference type="KEGG" id="sar:SAR1212"/>
<dbReference type="HOGENOM" id="CLU_129218_1_1_9"/>
<dbReference type="Proteomes" id="UP000000596">
    <property type="component" value="Chromosome"/>
</dbReference>
<dbReference type="Gene3D" id="1.10.10.10">
    <property type="entry name" value="Winged helix-like DNA-binding domain superfamily/Winged helix DNA-binding domain"/>
    <property type="match status" value="1"/>
</dbReference>
<dbReference type="HAMAP" id="MF_00245">
    <property type="entry name" value="UPF0122"/>
    <property type="match status" value="1"/>
</dbReference>
<dbReference type="InterPro" id="IPR013324">
    <property type="entry name" value="RNA_pol_sigma_r3/r4-like"/>
</dbReference>
<dbReference type="InterPro" id="IPR007394">
    <property type="entry name" value="UPF0122"/>
</dbReference>
<dbReference type="InterPro" id="IPR054831">
    <property type="entry name" value="UPF0122_fam_protein"/>
</dbReference>
<dbReference type="InterPro" id="IPR036388">
    <property type="entry name" value="WH-like_DNA-bd_sf"/>
</dbReference>
<dbReference type="NCBIfam" id="NF001067">
    <property type="entry name" value="PRK00118.1-2"/>
    <property type="match status" value="1"/>
</dbReference>
<dbReference type="NCBIfam" id="NF001070">
    <property type="entry name" value="PRK00118.1-6"/>
    <property type="match status" value="1"/>
</dbReference>
<dbReference type="NCBIfam" id="NF045758">
    <property type="entry name" value="YlxM"/>
    <property type="match status" value="1"/>
</dbReference>
<dbReference type="PANTHER" id="PTHR40083">
    <property type="entry name" value="UPF0122 PROTEIN CBO2450/CLC_2298"/>
    <property type="match status" value="1"/>
</dbReference>
<dbReference type="PANTHER" id="PTHR40083:SF1">
    <property type="entry name" value="UPF0122 PROTEIN YLXM"/>
    <property type="match status" value="1"/>
</dbReference>
<dbReference type="Pfam" id="PF04297">
    <property type="entry name" value="UPF0122"/>
    <property type="match status" value="1"/>
</dbReference>
<dbReference type="SUPFAM" id="SSF88659">
    <property type="entry name" value="Sigma3 and sigma4 domains of RNA polymerase sigma factors"/>
    <property type="match status" value="1"/>
</dbReference>